<evidence type="ECO:0000255" key="1">
    <source>
        <dbReference type="HAMAP-Rule" id="MF_01309"/>
    </source>
</evidence>
<evidence type="ECO:0000305" key="2"/>
<keyword id="KW-0687">Ribonucleoprotein</keyword>
<keyword id="KW-0689">Ribosomal protein</keyword>
<keyword id="KW-0694">RNA-binding</keyword>
<keyword id="KW-0699">rRNA-binding</keyword>
<dbReference type="EMBL" id="CP000644">
    <property type="protein sequence ID" value="ABO92022.1"/>
    <property type="molecule type" value="Genomic_DNA"/>
</dbReference>
<dbReference type="RefSeq" id="WP_005319740.1">
    <property type="nucleotide sequence ID" value="NC_009348.1"/>
</dbReference>
<dbReference type="SMR" id="A4ST00"/>
<dbReference type="STRING" id="29491.GCA_000820065_03471"/>
<dbReference type="GeneID" id="79877772"/>
<dbReference type="KEGG" id="asa:ASA_4081"/>
<dbReference type="eggNOG" id="COG0092">
    <property type="taxonomic scope" value="Bacteria"/>
</dbReference>
<dbReference type="HOGENOM" id="CLU_058591_0_2_6"/>
<dbReference type="Proteomes" id="UP000000225">
    <property type="component" value="Chromosome"/>
</dbReference>
<dbReference type="GO" id="GO:0022627">
    <property type="term" value="C:cytosolic small ribosomal subunit"/>
    <property type="evidence" value="ECO:0007669"/>
    <property type="project" value="TreeGrafter"/>
</dbReference>
<dbReference type="GO" id="GO:0003729">
    <property type="term" value="F:mRNA binding"/>
    <property type="evidence" value="ECO:0007669"/>
    <property type="project" value="UniProtKB-UniRule"/>
</dbReference>
<dbReference type="GO" id="GO:0019843">
    <property type="term" value="F:rRNA binding"/>
    <property type="evidence" value="ECO:0007669"/>
    <property type="project" value="UniProtKB-UniRule"/>
</dbReference>
<dbReference type="GO" id="GO:0003735">
    <property type="term" value="F:structural constituent of ribosome"/>
    <property type="evidence" value="ECO:0007669"/>
    <property type="project" value="InterPro"/>
</dbReference>
<dbReference type="GO" id="GO:0006412">
    <property type="term" value="P:translation"/>
    <property type="evidence" value="ECO:0007669"/>
    <property type="project" value="UniProtKB-UniRule"/>
</dbReference>
<dbReference type="CDD" id="cd02412">
    <property type="entry name" value="KH-II_30S_S3"/>
    <property type="match status" value="1"/>
</dbReference>
<dbReference type="FunFam" id="3.30.1140.32:FF:000001">
    <property type="entry name" value="30S ribosomal protein S3"/>
    <property type="match status" value="1"/>
</dbReference>
<dbReference type="FunFam" id="3.30.300.20:FF:000001">
    <property type="entry name" value="30S ribosomal protein S3"/>
    <property type="match status" value="1"/>
</dbReference>
<dbReference type="Gene3D" id="3.30.300.20">
    <property type="match status" value="1"/>
</dbReference>
<dbReference type="Gene3D" id="3.30.1140.32">
    <property type="entry name" value="Ribosomal protein S3, C-terminal domain"/>
    <property type="match status" value="1"/>
</dbReference>
<dbReference type="HAMAP" id="MF_01309_B">
    <property type="entry name" value="Ribosomal_uS3_B"/>
    <property type="match status" value="1"/>
</dbReference>
<dbReference type="InterPro" id="IPR004087">
    <property type="entry name" value="KH_dom"/>
</dbReference>
<dbReference type="InterPro" id="IPR015946">
    <property type="entry name" value="KH_dom-like_a/b"/>
</dbReference>
<dbReference type="InterPro" id="IPR004044">
    <property type="entry name" value="KH_dom_type_2"/>
</dbReference>
<dbReference type="InterPro" id="IPR009019">
    <property type="entry name" value="KH_sf_prok-type"/>
</dbReference>
<dbReference type="InterPro" id="IPR036419">
    <property type="entry name" value="Ribosomal_S3_C_sf"/>
</dbReference>
<dbReference type="InterPro" id="IPR005704">
    <property type="entry name" value="Ribosomal_uS3_bac-typ"/>
</dbReference>
<dbReference type="InterPro" id="IPR001351">
    <property type="entry name" value="Ribosomal_uS3_C"/>
</dbReference>
<dbReference type="InterPro" id="IPR018280">
    <property type="entry name" value="Ribosomal_uS3_CS"/>
</dbReference>
<dbReference type="NCBIfam" id="TIGR01009">
    <property type="entry name" value="rpsC_bact"/>
    <property type="match status" value="1"/>
</dbReference>
<dbReference type="PANTHER" id="PTHR11760">
    <property type="entry name" value="30S/40S RIBOSOMAL PROTEIN S3"/>
    <property type="match status" value="1"/>
</dbReference>
<dbReference type="PANTHER" id="PTHR11760:SF19">
    <property type="entry name" value="SMALL RIBOSOMAL SUBUNIT PROTEIN US3C"/>
    <property type="match status" value="1"/>
</dbReference>
<dbReference type="Pfam" id="PF07650">
    <property type="entry name" value="KH_2"/>
    <property type="match status" value="1"/>
</dbReference>
<dbReference type="Pfam" id="PF00189">
    <property type="entry name" value="Ribosomal_S3_C"/>
    <property type="match status" value="1"/>
</dbReference>
<dbReference type="SMART" id="SM00322">
    <property type="entry name" value="KH"/>
    <property type="match status" value="1"/>
</dbReference>
<dbReference type="SUPFAM" id="SSF54814">
    <property type="entry name" value="Prokaryotic type KH domain (KH-domain type II)"/>
    <property type="match status" value="1"/>
</dbReference>
<dbReference type="SUPFAM" id="SSF54821">
    <property type="entry name" value="Ribosomal protein S3 C-terminal domain"/>
    <property type="match status" value="1"/>
</dbReference>
<dbReference type="PROSITE" id="PS50823">
    <property type="entry name" value="KH_TYPE_2"/>
    <property type="match status" value="1"/>
</dbReference>
<dbReference type="PROSITE" id="PS00548">
    <property type="entry name" value="RIBOSOMAL_S3"/>
    <property type="match status" value="1"/>
</dbReference>
<sequence>MGQKVHPNGIRLGITKPWNSTWFANTKDFADNLYSDFQVRQFLTKELKNASLSKITIERPAKSIRVTIHTARPGVVIGKKGEDVEKLRKAVAVITGVPAQINISEVRKPELDGKLVADSITSQLERRVMFRRAMKRAVQNAMRLGAKGIKVEVSGRLGGAEIARTEWYREGRVPLHTLRADIDYATSEAHTTYGVIGVKVWIFKGEVLGGLAAVNAAAAQEQAPAKPKRDNKRRGK</sequence>
<proteinExistence type="inferred from homology"/>
<gene>
    <name evidence="1" type="primary">rpsC</name>
    <name type="ordered locus">ASA_4081</name>
</gene>
<protein>
    <recommendedName>
        <fullName evidence="1">Small ribosomal subunit protein uS3</fullName>
    </recommendedName>
    <alternativeName>
        <fullName evidence="2">30S ribosomal protein S3</fullName>
    </alternativeName>
</protein>
<organism>
    <name type="scientific">Aeromonas salmonicida (strain A449)</name>
    <dbReference type="NCBI Taxonomy" id="382245"/>
    <lineage>
        <taxon>Bacteria</taxon>
        <taxon>Pseudomonadati</taxon>
        <taxon>Pseudomonadota</taxon>
        <taxon>Gammaproteobacteria</taxon>
        <taxon>Aeromonadales</taxon>
        <taxon>Aeromonadaceae</taxon>
        <taxon>Aeromonas</taxon>
    </lineage>
</organism>
<feature type="chain" id="PRO_0000293745" description="Small ribosomal subunit protein uS3">
    <location>
        <begin position="1"/>
        <end position="236"/>
    </location>
</feature>
<feature type="domain" description="KH type-2" evidence="1">
    <location>
        <begin position="39"/>
        <end position="107"/>
    </location>
</feature>
<comment type="function">
    <text evidence="1">Binds the lower part of the 30S subunit head. Binds mRNA in the 70S ribosome, positioning it for translation.</text>
</comment>
<comment type="subunit">
    <text evidence="1">Part of the 30S ribosomal subunit. Forms a tight complex with proteins S10 and S14.</text>
</comment>
<comment type="similarity">
    <text evidence="1">Belongs to the universal ribosomal protein uS3 family.</text>
</comment>
<accession>A4ST00</accession>
<name>RS3_AERS4</name>
<reference key="1">
    <citation type="journal article" date="2008" name="BMC Genomics">
        <title>The genome of Aeromonas salmonicida subsp. salmonicida A449: insights into the evolution of a fish pathogen.</title>
        <authorList>
            <person name="Reith M.E."/>
            <person name="Singh R.K."/>
            <person name="Curtis B."/>
            <person name="Boyd J.M."/>
            <person name="Bouevitch A."/>
            <person name="Kimball J."/>
            <person name="Munholland J."/>
            <person name="Murphy C."/>
            <person name="Sarty D."/>
            <person name="Williams J."/>
            <person name="Nash J.H."/>
            <person name="Johnson S.C."/>
            <person name="Brown L.L."/>
        </authorList>
    </citation>
    <scope>NUCLEOTIDE SEQUENCE [LARGE SCALE GENOMIC DNA]</scope>
    <source>
        <strain>A449</strain>
    </source>
</reference>